<accession>B9EM04</accession>
<accession>B9EMN4</accession>
<sequence>MADDATRKAVSEIPLLKTNSGPRDKELWVQRLREEYLALIKYVENNKTADNDWFRLESNKEGTRWFGKCWYIHDLLKYEFDMEFDIPVTYPSTAPEIAIPELDGKTAKMYRGGKICLTDHFKPLWARNVPKFGLAHLMALGLGPWLAVEIPDLISKGLITHREQQGS</sequence>
<dbReference type="EMBL" id="BT056679">
    <property type="protein sequence ID" value="ACM08551.1"/>
    <property type="molecule type" value="mRNA"/>
</dbReference>
<dbReference type="EMBL" id="BT056909">
    <property type="protein sequence ID" value="ACM08781.1"/>
    <property type="molecule type" value="mRNA"/>
</dbReference>
<dbReference type="EMBL" id="BT057397">
    <property type="protein sequence ID" value="ACM09269.1"/>
    <property type="molecule type" value="mRNA"/>
</dbReference>
<dbReference type="EMBL" id="BT057543">
    <property type="protein sequence ID" value="ACM09415.1"/>
    <property type="molecule type" value="mRNA"/>
</dbReference>
<dbReference type="RefSeq" id="NP_001140127.1">
    <property type="nucleotide sequence ID" value="NM_001146655.1"/>
</dbReference>
<dbReference type="SMR" id="B9EM04"/>
<dbReference type="STRING" id="8030.ENSSSAP00000016166"/>
<dbReference type="PaxDb" id="8030-ENSSSAP00000016166"/>
<dbReference type="GeneID" id="100286715"/>
<dbReference type="KEGG" id="sasa:100286715"/>
<dbReference type="CTD" id="51506"/>
<dbReference type="OrthoDB" id="23908at7898"/>
<dbReference type="Proteomes" id="UP000087266">
    <property type="component" value="Chromosome ssa11"/>
</dbReference>
<dbReference type="GO" id="GO:0005737">
    <property type="term" value="C:cytoplasm"/>
    <property type="evidence" value="ECO:0007669"/>
    <property type="project" value="TreeGrafter"/>
</dbReference>
<dbReference type="GO" id="GO:0061657">
    <property type="term" value="F:UFM1 conjugating enzyme activity"/>
    <property type="evidence" value="ECO:0000250"/>
    <property type="project" value="UniProtKB"/>
</dbReference>
<dbReference type="GO" id="GO:1990592">
    <property type="term" value="P:protein K69-linked ufmylation"/>
    <property type="evidence" value="ECO:0007669"/>
    <property type="project" value="TreeGrafter"/>
</dbReference>
<dbReference type="GO" id="GO:0071569">
    <property type="term" value="P:protein ufmylation"/>
    <property type="evidence" value="ECO:0000250"/>
    <property type="project" value="UniProtKB"/>
</dbReference>
<dbReference type="GO" id="GO:0034976">
    <property type="term" value="P:response to endoplasmic reticulum stress"/>
    <property type="evidence" value="ECO:0000250"/>
    <property type="project" value="UniProtKB"/>
</dbReference>
<dbReference type="GO" id="GO:0061709">
    <property type="term" value="P:reticulophagy"/>
    <property type="evidence" value="ECO:0000250"/>
    <property type="project" value="UniProtKB"/>
</dbReference>
<dbReference type="CDD" id="cd11686">
    <property type="entry name" value="UBCc_UFC1"/>
    <property type="match status" value="1"/>
</dbReference>
<dbReference type="FunFam" id="3.10.110.10:FF:000042">
    <property type="entry name" value="Ubiquitin-fold modifier-conjugating enzyme 1"/>
    <property type="match status" value="1"/>
</dbReference>
<dbReference type="Gene3D" id="3.10.110.10">
    <property type="entry name" value="Ubiquitin Conjugating Enzyme"/>
    <property type="match status" value="1"/>
</dbReference>
<dbReference type="InterPro" id="IPR016135">
    <property type="entry name" value="UBQ-conjugating_enzyme/RWD"/>
</dbReference>
<dbReference type="InterPro" id="IPR014806">
    <property type="entry name" value="Ufc1"/>
</dbReference>
<dbReference type="PANTHER" id="PTHR12921">
    <property type="entry name" value="UBIQUITIN-FOLD MODIFIER-CONJUGATING ENZYME 1"/>
    <property type="match status" value="1"/>
</dbReference>
<dbReference type="PANTHER" id="PTHR12921:SF0">
    <property type="entry name" value="UBIQUITIN-FOLD MODIFIER-CONJUGATING ENZYME 1"/>
    <property type="match status" value="1"/>
</dbReference>
<dbReference type="Pfam" id="PF08694">
    <property type="entry name" value="UFC1"/>
    <property type="match status" value="1"/>
</dbReference>
<dbReference type="PIRSF" id="PIRSF008716">
    <property type="entry name" value="DUF1782"/>
    <property type="match status" value="1"/>
</dbReference>
<dbReference type="SUPFAM" id="SSF54495">
    <property type="entry name" value="UBC-like"/>
    <property type="match status" value="1"/>
</dbReference>
<organism>
    <name type="scientific">Salmo salar</name>
    <name type="common">Atlantic salmon</name>
    <dbReference type="NCBI Taxonomy" id="8030"/>
    <lineage>
        <taxon>Eukaryota</taxon>
        <taxon>Metazoa</taxon>
        <taxon>Chordata</taxon>
        <taxon>Craniata</taxon>
        <taxon>Vertebrata</taxon>
        <taxon>Euteleostomi</taxon>
        <taxon>Actinopterygii</taxon>
        <taxon>Neopterygii</taxon>
        <taxon>Teleostei</taxon>
        <taxon>Protacanthopterygii</taxon>
        <taxon>Salmoniformes</taxon>
        <taxon>Salmonidae</taxon>
        <taxon>Salmoninae</taxon>
        <taxon>Salmo</taxon>
    </lineage>
</organism>
<keyword id="KW-1185">Reference proteome</keyword>
<keyword id="KW-0833">Ubl conjugation pathway</keyword>
<proteinExistence type="evidence at transcript level"/>
<protein>
    <recommendedName>
        <fullName evidence="2">Ubiquitin-fold modifier-conjugating enzyme 1</fullName>
    </recommendedName>
    <alternativeName>
        <fullName evidence="1">Ufm1-conjugating enzyme 1</fullName>
    </alternativeName>
</protein>
<gene>
    <name evidence="1" type="primary">ufc1</name>
</gene>
<evidence type="ECO:0000250" key="1">
    <source>
        <dbReference type="UniProtKB" id="Q9Y3C8"/>
    </source>
</evidence>
<evidence type="ECO:0000305" key="2"/>
<reference key="1">
    <citation type="journal article" date="2010" name="BMC Genomics">
        <title>Salmo salar and Esox lucius full-length cDNA sequences reveal changes in evolutionary pressures on a post-tetraploidization genome.</title>
        <authorList>
            <person name="Leong J.S."/>
            <person name="Jantzen S.G."/>
            <person name="von Schalburg K.R."/>
            <person name="Cooper G.A."/>
            <person name="Messmer A.M."/>
            <person name="Liao N.Y."/>
            <person name="Munro S."/>
            <person name="Moore R."/>
            <person name="Holt R.A."/>
            <person name="Jones S.J."/>
            <person name="Davidson W.S."/>
            <person name="Koop B.F."/>
        </authorList>
    </citation>
    <scope>NUCLEOTIDE SEQUENCE [LARGE SCALE MRNA]</scope>
    <source>
        <tissue>Kidney</tissue>
        <tissue>Thyroid</tissue>
    </source>
</reference>
<comment type="function">
    <text evidence="1">E2-like enzyme which specifically catalyzes the second step in ufmylation. Accepts the ubiquitin-like modifier UFM1 from the E1 enzyme UBA5 and forms an intermediate with UFM1 via a thioester linkage. Ufmylation is involved in various processes, such as ribosome recycling, response to DNA damage, interferon response or reticulophagy (also called ER-phagy).</text>
</comment>
<comment type="subunit">
    <text evidence="1">Interacts with UBA5 (via C-terminus). Interacts with UFL1. Interacts with UFM1.</text>
</comment>
<comment type="similarity">
    <text evidence="2">Belongs to the ubiquitin-conjugating enzyme family. UFC1 subfamily.</text>
</comment>
<name>UFC1_SALSA</name>
<feature type="chain" id="PRO_0000391958" description="Ubiquitin-fold modifier-conjugating enzyme 1">
    <location>
        <begin position="1"/>
        <end position="167"/>
    </location>
</feature>
<feature type="active site" description="Glycyl thioester intermediate" evidence="1">
    <location>
        <position position="116"/>
    </location>
</feature>
<feature type="sequence conflict" description="In Ref. 1; ACM08781." evidence="2" ref="1">
    <original>I</original>
    <variation>V</variation>
    <location>
        <position position="97"/>
    </location>
</feature>